<reference key="1">
    <citation type="journal article" date="2014" name="Metab. Eng.">
        <title>Elucidation and in planta reconstitution of the parthenolide biosynthetic pathway.</title>
        <authorList>
            <person name="Liu Q."/>
            <person name="Manzano D."/>
            <person name="Tanic N."/>
            <person name="Pesic M."/>
            <person name="Bankovic J."/>
            <person name="Pateraki I."/>
            <person name="Ricard L."/>
            <person name="Ferrer A."/>
            <person name="de Vos R."/>
            <person name="van de Krol S."/>
            <person name="Bouwmeester H."/>
        </authorList>
    </citation>
    <scope>NUCLEOTIDE SEQUENCE [MRNA]</scope>
    <scope>DEVELOPMENTAL STAGE</scope>
</reference>
<reference key="2">
    <citation type="journal article" date="2019" name="Nat. Prod. Rep.">
        <title>Non-volatile natural products in plant glandular trichomes: chemistry, biological activities and biosynthesis.</title>
        <authorList>
            <person name="Liu Y."/>
            <person name="Jing S.-X."/>
            <person name="Luo S.-H."/>
            <person name="Li S.-H."/>
        </authorList>
    </citation>
    <scope>PATHWAY</scope>
    <scope>REVIEW</scope>
</reference>
<keyword id="KW-0325">Glycoprotein</keyword>
<keyword id="KW-0349">Heme</keyword>
<keyword id="KW-0408">Iron</keyword>
<keyword id="KW-0472">Membrane</keyword>
<keyword id="KW-0479">Metal-binding</keyword>
<keyword id="KW-0503">Monooxygenase</keyword>
<keyword id="KW-0560">Oxidoreductase</keyword>
<keyword id="KW-0735">Signal-anchor</keyword>
<keyword id="KW-0812">Transmembrane</keyword>
<keyword id="KW-1133">Transmembrane helix</keyword>
<dbReference type="EMBL" id="KC954154">
    <property type="protein sequence ID" value="AHM24032.1"/>
    <property type="molecule type" value="mRNA"/>
</dbReference>
<dbReference type="SMR" id="X2EVQ5"/>
<dbReference type="UniPathway" id="UPA00213"/>
<dbReference type="GO" id="GO:0016020">
    <property type="term" value="C:membrane"/>
    <property type="evidence" value="ECO:0007669"/>
    <property type="project" value="UniProtKB-SubCell"/>
</dbReference>
<dbReference type="GO" id="GO:0020037">
    <property type="term" value="F:heme binding"/>
    <property type="evidence" value="ECO:0007669"/>
    <property type="project" value="InterPro"/>
</dbReference>
<dbReference type="GO" id="GO:0005506">
    <property type="term" value="F:iron ion binding"/>
    <property type="evidence" value="ECO:0007669"/>
    <property type="project" value="InterPro"/>
</dbReference>
<dbReference type="GO" id="GO:0004497">
    <property type="term" value="F:monooxygenase activity"/>
    <property type="evidence" value="ECO:0007669"/>
    <property type="project" value="UniProtKB-KW"/>
</dbReference>
<dbReference type="GO" id="GO:0016705">
    <property type="term" value="F:oxidoreductase activity, acting on paired donors, with incorporation or reduction of molecular oxygen"/>
    <property type="evidence" value="ECO:0007669"/>
    <property type="project" value="InterPro"/>
</dbReference>
<dbReference type="GO" id="GO:0051762">
    <property type="term" value="P:sesquiterpene biosynthetic process"/>
    <property type="evidence" value="ECO:0007669"/>
    <property type="project" value="UniProtKB-ARBA"/>
</dbReference>
<dbReference type="GO" id="GO:0016114">
    <property type="term" value="P:terpenoid biosynthetic process"/>
    <property type="evidence" value="ECO:0007669"/>
    <property type="project" value="UniProtKB-UniPathway"/>
</dbReference>
<dbReference type="CDD" id="cd11072">
    <property type="entry name" value="CYP71-like"/>
    <property type="match status" value="1"/>
</dbReference>
<dbReference type="FunFam" id="1.10.630.10:FF:000043">
    <property type="entry name" value="Cytochrome P450 99A2"/>
    <property type="match status" value="1"/>
</dbReference>
<dbReference type="Gene3D" id="1.10.630.10">
    <property type="entry name" value="Cytochrome P450"/>
    <property type="match status" value="1"/>
</dbReference>
<dbReference type="InterPro" id="IPR001128">
    <property type="entry name" value="Cyt_P450"/>
</dbReference>
<dbReference type="InterPro" id="IPR017972">
    <property type="entry name" value="Cyt_P450_CS"/>
</dbReference>
<dbReference type="InterPro" id="IPR002401">
    <property type="entry name" value="Cyt_P450_E_grp-I"/>
</dbReference>
<dbReference type="InterPro" id="IPR036396">
    <property type="entry name" value="Cyt_P450_sf"/>
</dbReference>
<dbReference type="PANTHER" id="PTHR47955:SF13">
    <property type="entry name" value="CYTOCHROME P450"/>
    <property type="match status" value="1"/>
</dbReference>
<dbReference type="PANTHER" id="PTHR47955">
    <property type="entry name" value="CYTOCHROME P450 FAMILY 71 PROTEIN"/>
    <property type="match status" value="1"/>
</dbReference>
<dbReference type="Pfam" id="PF00067">
    <property type="entry name" value="p450"/>
    <property type="match status" value="1"/>
</dbReference>
<dbReference type="PRINTS" id="PR00463">
    <property type="entry name" value="EP450I"/>
</dbReference>
<dbReference type="PRINTS" id="PR00385">
    <property type="entry name" value="P450"/>
</dbReference>
<dbReference type="SUPFAM" id="SSF48264">
    <property type="entry name" value="Cytochrome P450"/>
    <property type="match status" value="1"/>
</dbReference>
<dbReference type="PROSITE" id="PS00086">
    <property type="entry name" value="CYTOCHROME_P450"/>
    <property type="match status" value="1"/>
</dbReference>
<sequence>MALYIIFLLIASSFILFSFIFSQKPKGKLPPGPPKLPIIGNIHQTVGGLPHYVFRDLAKKYGPIMHLQLGQVSIMVVSSPRLAEEVLKTNDIVVANRPYSLVGDIVLYGSSDVAFGSYGDYWRQMKKIMTVEVLSAKKVAAISGTRQQEVNNLMEYIRSTCGKPFHVREHVMQRNNNIICKSLFGDNCKQQHVLIESLDEMMKLSTGFNVSDLFPNWGFLPVISGYKSTLTRIHKNIDSILSEIFEERKIKRQKGGASDEDMLDVLLNIKERGGLEFPVADNNIKAIFVNMFVGGTDTSVATIEWAMTELMRNPKVMSKAQAEVRQLFKGKNTILDKDLQDLVYLKYIIKETLRLHPVVPILLPRECRGPCKIGGYDIPMNTVLFVNAFACSTDPEYWDDAESFKPERFENSSLDLNGRACEYLPFGAGRRMCPGITFGMSVVEIILAQLLYYFNWELPNGLSPNDIDLTPNFGAVADKKVPLQIVPTLNSLK</sequence>
<feature type="chain" id="PRO_0000448400" description="Cytochrome P450 Tp9025">
    <location>
        <begin position="1"/>
        <end position="493"/>
    </location>
</feature>
<feature type="transmembrane region" description="Helical; Signal-anchor for type II membrane protein" evidence="2">
    <location>
        <begin position="1"/>
        <end position="21"/>
    </location>
</feature>
<feature type="binding site" description="axial binding residue" evidence="1">
    <location>
        <position position="433"/>
    </location>
    <ligand>
        <name>heme</name>
        <dbReference type="ChEBI" id="CHEBI:30413"/>
    </ligand>
    <ligandPart>
        <name>Fe</name>
        <dbReference type="ChEBI" id="CHEBI:18248"/>
    </ligandPart>
</feature>
<feature type="glycosylation site" description="N-linked (GlcNAc...) asparagine" evidence="3">
    <location>
        <position position="209"/>
    </location>
</feature>
<feature type="glycosylation site" description="N-linked (GlcNAc...) asparagine" evidence="3">
    <location>
        <position position="411"/>
    </location>
</feature>
<comment type="function">
    <text evidence="5">Probably involved in the biosynthesis of germacrene-derived sesquiterpene lactones.</text>
</comment>
<comment type="cofactor">
    <cofactor evidence="1">
        <name>heme</name>
        <dbReference type="ChEBI" id="CHEBI:30413"/>
    </cofactor>
</comment>
<comment type="pathway">
    <text evidence="6">Secondary metabolite biosynthesis; terpenoid biosynthesis.</text>
</comment>
<comment type="subcellular location">
    <subcellularLocation>
        <location evidence="2">Membrane</location>
        <topology evidence="2">Single-pass type II membrane protein</topology>
    </subcellularLocation>
</comment>
<comment type="developmental stage">
    <text evidence="4">During ovary development, accumulates until the stage 3 and fades out progressively to disappear at stage 6.</text>
</comment>
<comment type="similarity">
    <text evidence="7">Belongs to the cytochrome P450 family.</text>
</comment>
<evidence type="ECO:0000250" key="1">
    <source>
        <dbReference type="UniProtKB" id="P04798"/>
    </source>
</evidence>
<evidence type="ECO:0000255" key="2"/>
<evidence type="ECO:0000255" key="3">
    <source>
        <dbReference type="PROSITE-ProRule" id="PRU00498"/>
    </source>
</evidence>
<evidence type="ECO:0000269" key="4">
    <source>
    </source>
</evidence>
<evidence type="ECO:0000303" key="5">
    <source>
    </source>
</evidence>
<evidence type="ECO:0000303" key="6">
    <source>
    </source>
</evidence>
<evidence type="ECO:0000305" key="7"/>
<evidence type="ECO:0000312" key="8">
    <source>
        <dbReference type="EMBL" id="AHM24032.1"/>
    </source>
</evidence>
<organism>
    <name type="scientific">Tanacetum parthenium</name>
    <name type="common">Feverfew</name>
    <name type="synonym">Matricaria parthenium</name>
    <dbReference type="NCBI Taxonomy" id="127999"/>
    <lineage>
        <taxon>Eukaryota</taxon>
        <taxon>Viridiplantae</taxon>
        <taxon>Streptophyta</taxon>
        <taxon>Embryophyta</taxon>
        <taxon>Tracheophyta</taxon>
        <taxon>Spermatophyta</taxon>
        <taxon>Magnoliopsida</taxon>
        <taxon>eudicotyledons</taxon>
        <taxon>Gunneridae</taxon>
        <taxon>Pentapetalae</taxon>
        <taxon>asterids</taxon>
        <taxon>campanulids</taxon>
        <taxon>Asterales</taxon>
        <taxon>Asteraceae</taxon>
        <taxon>Asteroideae</taxon>
        <taxon>Anthemideae</taxon>
        <taxon>Anthemidinae</taxon>
        <taxon>Tanacetum</taxon>
    </lineage>
</organism>
<name>T9025_TANPA</name>
<proteinExistence type="evidence at transcript level"/>
<accession>X2EVQ5</accession>
<protein>
    <recommendedName>
        <fullName evidence="8">Cytochrome P450 Tp9025</fullName>
        <shortName evidence="5">Tp9025</shortName>
    </recommendedName>
</protein>